<organism>
    <name type="scientific">Campylobacter jejuni (strain RM1221)</name>
    <dbReference type="NCBI Taxonomy" id="195099"/>
    <lineage>
        <taxon>Bacteria</taxon>
        <taxon>Pseudomonadati</taxon>
        <taxon>Campylobacterota</taxon>
        <taxon>Epsilonproteobacteria</taxon>
        <taxon>Campylobacterales</taxon>
        <taxon>Campylobacteraceae</taxon>
        <taxon>Campylobacter</taxon>
    </lineage>
</organism>
<keyword id="KW-0687">Ribonucleoprotein</keyword>
<keyword id="KW-0689">Ribosomal protein</keyword>
<feature type="chain" id="PRO_1000003924" description="Small ribosomal subunit protein uS2">
    <location>
        <begin position="1"/>
        <end position="263"/>
    </location>
</feature>
<feature type="region of interest" description="Disordered" evidence="2">
    <location>
        <begin position="223"/>
        <end position="263"/>
    </location>
</feature>
<feature type="compositionally biased region" description="Basic and acidic residues" evidence="2">
    <location>
        <begin position="223"/>
        <end position="249"/>
    </location>
</feature>
<feature type="compositionally biased region" description="Acidic residues" evidence="2">
    <location>
        <begin position="250"/>
        <end position="263"/>
    </location>
</feature>
<proteinExistence type="inferred from homology"/>
<gene>
    <name evidence="1" type="primary">rpsB</name>
    <name type="ordered locus">CJE1316</name>
</gene>
<sequence length="263" mass="30198">MVSMRDLLECGVHFGHQTRRWNPKMKKFIFGERKGIYVIDLQKTLRYFRYTYNIVRDAAAEGKTILFVGTKKQAGGAIKEYAEKCGMPYVNHRWLGGMMTNFGTIRQSIRKLEVIEKMEEDGSIKLLTKKEALMLTRKKEKLLAYLGGIRYMKTQPDMIFVIDTVKEKIAVQEANRLRIPVVAPLDTNCDPDLVTYPIPGNDDAIRSVQLFCQEMAEAINEGKALREQDGEALANEEKEITDEEKKEVLDEAMSEEDFGEEQE</sequence>
<reference key="1">
    <citation type="journal article" date="2005" name="PLoS Biol.">
        <title>Major structural differences and novel potential virulence mechanisms from the genomes of multiple Campylobacter species.</title>
        <authorList>
            <person name="Fouts D.E."/>
            <person name="Mongodin E.F."/>
            <person name="Mandrell R.E."/>
            <person name="Miller W.G."/>
            <person name="Rasko D.A."/>
            <person name="Ravel J."/>
            <person name="Brinkac L.M."/>
            <person name="DeBoy R.T."/>
            <person name="Parker C.T."/>
            <person name="Daugherty S.C."/>
            <person name="Dodson R.J."/>
            <person name="Durkin A.S."/>
            <person name="Madupu R."/>
            <person name="Sullivan S.A."/>
            <person name="Shetty J.U."/>
            <person name="Ayodeji M.A."/>
            <person name="Shvartsbeyn A."/>
            <person name="Schatz M.C."/>
            <person name="Badger J.H."/>
            <person name="Fraser C.M."/>
            <person name="Nelson K.E."/>
        </authorList>
    </citation>
    <scope>NUCLEOTIDE SEQUENCE [LARGE SCALE GENOMIC DNA]</scope>
    <source>
        <strain>RM1221</strain>
    </source>
</reference>
<accession>Q5HTT2</accession>
<dbReference type="EMBL" id="CP000025">
    <property type="protein sequence ID" value="AAW35637.1"/>
    <property type="molecule type" value="Genomic_DNA"/>
</dbReference>
<dbReference type="RefSeq" id="WP_002853455.1">
    <property type="nucleotide sequence ID" value="NC_003912.7"/>
</dbReference>
<dbReference type="SMR" id="Q5HTT2"/>
<dbReference type="KEGG" id="cjr:CJE1316"/>
<dbReference type="HOGENOM" id="CLU_040318_1_2_7"/>
<dbReference type="GO" id="GO:0022627">
    <property type="term" value="C:cytosolic small ribosomal subunit"/>
    <property type="evidence" value="ECO:0007669"/>
    <property type="project" value="TreeGrafter"/>
</dbReference>
<dbReference type="GO" id="GO:0003735">
    <property type="term" value="F:structural constituent of ribosome"/>
    <property type="evidence" value="ECO:0007669"/>
    <property type="project" value="InterPro"/>
</dbReference>
<dbReference type="GO" id="GO:0006412">
    <property type="term" value="P:translation"/>
    <property type="evidence" value="ECO:0007669"/>
    <property type="project" value="UniProtKB-UniRule"/>
</dbReference>
<dbReference type="CDD" id="cd01425">
    <property type="entry name" value="RPS2"/>
    <property type="match status" value="1"/>
</dbReference>
<dbReference type="FunFam" id="1.10.287.610:FF:000001">
    <property type="entry name" value="30S ribosomal protein S2"/>
    <property type="match status" value="1"/>
</dbReference>
<dbReference type="Gene3D" id="3.40.50.10490">
    <property type="entry name" value="Glucose-6-phosphate isomerase like protein, domain 1"/>
    <property type="match status" value="1"/>
</dbReference>
<dbReference type="Gene3D" id="1.10.287.610">
    <property type="entry name" value="Helix hairpin bin"/>
    <property type="match status" value="1"/>
</dbReference>
<dbReference type="HAMAP" id="MF_00291_B">
    <property type="entry name" value="Ribosomal_uS2_B"/>
    <property type="match status" value="1"/>
</dbReference>
<dbReference type="InterPro" id="IPR001865">
    <property type="entry name" value="Ribosomal_uS2"/>
</dbReference>
<dbReference type="InterPro" id="IPR005706">
    <property type="entry name" value="Ribosomal_uS2_bac/mit/plastid"/>
</dbReference>
<dbReference type="InterPro" id="IPR018130">
    <property type="entry name" value="Ribosomal_uS2_CS"/>
</dbReference>
<dbReference type="InterPro" id="IPR023591">
    <property type="entry name" value="Ribosomal_uS2_flav_dom_sf"/>
</dbReference>
<dbReference type="NCBIfam" id="TIGR01011">
    <property type="entry name" value="rpsB_bact"/>
    <property type="match status" value="1"/>
</dbReference>
<dbReference type="PANTHER" id="PTHR12534">
    <property type="entry name" value="30S RIBOSOMAL PROTEIN S2 PROKARYOTIC AND ORGANELLAR"/>
    <property type="match status" value="1"/>
</dbReference>
<dbReference type="PANTHER" id="PTHR12534:SF0">
    <property type="entry name" value="SMALL RIBOSOMAL SUBUNIT PROTEIN US2M"/>
    <property type="match status" value="1"/>
</dbReference>
<dbReference type="Pfam" id="PF00318">
    <property type="entry name" value="Ribosomal_S2"/>
    <property type="match status" value="1"/>
</dbReference>
<dbReference type="PRINTS" id="PR00395">
    <property type="entry name" value="RIBOSOMALS2"/>
</dbReference>
<dbReference type="SUPFAM" id="SSF52313">
    <property type="entry name" value="Ribosomal protein S2"/>
    <property type="match status" value="1"/>
</dbReference>
<dbReference type="PROSITE" id="PS00962">
    <property type="entry name" value="RIBOSOMAL_S2_1"/>
    <property type="match status" value="1"/>
</dbReference>
<dbReference type="PROSITE" id="PS00963">
    <property type="entry name" value="RIBOSOMAL_S2_2"/>
    <property type="match status" value="1"/>
</dbReference>
<protein>
    <recommendedName>
        <fullName evidence="1">Small ribosomal subunit protein uS2</fullName>
    </recommendedName>
    <alternativeName>
        <fullName evidence="3">30S ribosomal protein S2</fullName>
    </alternativeName>
</protein>
<name>RS2_CAMJR</name>
<evidence type="ECO:0000255" key="1">
    <source>
        <dbReference type="HAMAP-Rule" id="MF_00291"/>
    </source>
</evidence>
<evidence type="ECO:0000256" key="2">
    <source>
        <dbReference type="SAM" id="MobiDB-lite"/>
    </source>
</evidence>
<evidence type="ECO:0000305" key="3"/>
<comment type="similarity">
    <text evidence="1">Belongs to the universal ribosomal protein uS2 family.</text>
</comment>